<evidence type="ECO:0000255" key="1">
    <source>
        <dbReference type="HAMAP-Rule" id="MF_01690"/>
    </source>
</evidence>
<dbReference type="EC" id="3.5.1.18" evidence="1"/>
<dbReference type="EMBL" id="AE003849">
    <property type="protein sequence ID" value="AAF82929.1"/>
    <property type="molecule type" value="Genomic_DNA"/>
</dbReference>
<dbReference type="PIR" id="B82846">
    <property type="entry name" value="B82846"/>
</dbReference>
<dbReference type="RefSeq" id="WP_010892662.1">
    <property type="nucleotide sequence ID" value="NC_002488.3"/>
</dbReference>
<dbReference type="SMR" id="Q9PH30"/>
<dbReference type="STRING" id="160492.XF_0116"/>
<dbReference type="KEGG" id="xfa:XF_0116"/>
<dbReference type="PATRIC" id="fig|160492.11.peg.120"/>
<dbReference type="eggNOG" id="COG0624">
    <property type="taxonomic scope" value="Bacteria"/>
</dbReference>
<dbReference type="HOGENOM" id="CLU_021802_4_0_6"/>
<dbReference type="UniPathway" id="UPA00034">
    <property type="reaction ID" value="UER00021"/>
</dbReference>
<dbReference type="Proteomes" id="UP000000812">
    <property type="component" value="Chromosome"/>
</dbReference>
<dbReference type="GO" id="GO:0008777">
    <property type="term" value="F:acetylornithine deacetylase activity"/>
    <property type="evidence" value="ECO:0007669"/>
    <property type="project" value="TreeGrafter"/>
</dbReference>
<dbReference type="GO" id="GO:0050897">
    <property type="term" value="F:cobalt ion binding"/>
    <property type="evidence" value="ECO:0007669"/>
    <property type="project" value="UniProtKB-UniRule"/>
</dbReference>
<dbReference type="GO" id="GO:0009014">
    <property type="term" value="F:succinyl-diaminopimelate desuccinylase activity"/>
    <property type="evidence" value="ECO:0007669"/>
    <property type="project" value="UniProtKB-UniRule"/>
</dbReference>
<dbReference type="GO" id="GO:0008270">
    <property type="term" value="F:zinc ion binding"/>
    <property type="evidence" value="ECO:0007669"/>
    <property type="project" value="UniProtKB-UniRule"/>
</dbReference>
<dbReference type="GO" id="GO:0019877">
    <property type="term" value="P:diaminopimelate biosynthetic process"/>
    <property type="evidence" value="ECO:0007669"/>
    <property type="project" value="UniProtKB-UniRule"/>
</dbReference>
<dbReference type="GO" id="GO:0006526">
    <property type="term" value="P:L-arginine biosynthetic process"/>
    <property type="evidence" value="ECO:0007669"/>
    <property type="project" value="TreeGrafter"/>
</dbReference>
<dbReference type="GO" id="GO:0009089">
    <property type="term" value="P:lysine biosynthetic process via diaminopimelate"/>
    <property type="evidence" value="ECO:0007669"/>
    <property type="project" value="UniProtKB-UniRule"/>
</dbReference>
<dbReference type="CDD" id="cd03891">
    <property type="entry name" value="M20_DapE_proteobac"/>
    <property type="match status" value="1"/>
</dbReference>
<dbReference type="FunFam" id="3.40.630.10:FF:000005">
    <property type="entry name" value="Succinyl-diaminopimelate desuccinylase"/>
    <property type="match status" value="1"/>
</dbReference>
<dbReference type="Gene3D" id="3.40.630.10">
    <property type="entry name" value="Zn peptidases"/>
    <property type="match status" value="2"/>
</dbReference>
<dbReference type="HAMAP" id="MF_01690">
    <property type="entry name" value="DapE"/>
    <property type="match status" value="1"/>
</dbReference>
<dbReference type="InterPro" id="IPR001261">
    <property type="entry name" value="ArgE/DapE_CS"/>
</dbReference>
<dbReference type="InterPro" id="IPR036264">
    <property type="entry name" value="Bact_exopeptidase_dim_dom"/>
</dbReference>
<dbReference type="InterPro" id="IPR005941">
    <property type="entry name" value="DapE_proteobac"/>
</dbReference>
<dbReference type="InterPro" id="IPR002933">
    <property type="entry name" value="Peptidase_M20"/>
</dbReference>
<dbReference type="InterPro" id="IPR011650">
    <property type="entry name" value="Peptidase_M20_dimer"/>
</dbReference>
<dbReference type="InterPro" id="IPR050072">
    <property type="entry name" value="Peptidase_M20A"/>
</dbReference>
<dbReference type="NCBIfam" id="TIGR01246">
    <property type="entry name" value="dapE_proteo"/>
    <property type="match status" value="1"/>
</dbReference>
<dbReference type="NCBIfam" id="NF009557">
    <property type="entry name" value="PRK13009.1"/>
    <property type="match status" value="1"/>
</dbReference>
<dbReference type="PANTHER" id="PTHR43808">
    <property type="entry name" value="ACETYLORNITHINE DEACETYLASE"/>
    <property type="match status" value="1"/>
</dbReference>
<dbReference type="PANTHER" id="PTHR43808:SF31">
    <property type="entry name" value="N-ACETYL-L-CITRULLINE DEACETYLASE"/>
    <property type="match status" value="1"/>
</dbReference>
<dbReference type="Pfam" id="PF07687">
    <property type="entry name" value="M20_dimer"/>
    <property type="match status" value="1"/>
</dbReference>
<dbReference type="Pfam" id="PF01546">
    <property type="entry name" value="Peptidase_M20"/>
    <property type="match status" value="1"/>
</dbReference>
<dbReference type="SUPFAM" id="SSF55031">
    <property type="entry name" value="Bacterial exopeptidase dimerisation domain"/>
    <property type="match status" value="1"/>
</dbReference>
<dbReference type="SUPFAM" id="SSF53187">
    <property type="entry name" value="Zn-dependent exopeptidases"/>
    <property type="match status" value="1"/>
</dbReference>
<dbReference type="PROSITE" id="PS00759">
    <property type="entry name" value="ARGE_DAPE_CPG2_2"/>
    <property type="match status" value="1"/>
</dbReference>
<comment type="function">
    <text evidence="1">Catalyzes the hydrolysis of N-succinyl-L,L-diaminopimelic acid (SDAP), forming succinate and LL-2,6-diaminopimelate (DAP), an intermediate involved in the bacterial biosynthesis of lysine and meso-diaminopimelic acid, an essential component of bacterial cell walls.</text>
</comment>
<comment type="catalytic activity">
    <reaction evidence="1">
        <text>N-succinyl-(2S,6S)-2,6-diaminopimelate + H2O = (2S,6S)-2,6-diaminopimelate + succinate</text>
        <dbReference type="Rhea" id="RHEA:22608"/>
        <dbReference type="ChEBI" id="CHEBI:15377"/>
        <dbReference type="ChEBI" id="CHEBI:30031"/>
        <dbReference type="ChEBI" id="CHEBI:57609"/>
        <dbReference type="ChEBI" id="CHEBI:58087"/>
        <dbReference type="EC" id="3.5.1.18"/>
    </reaction>
</comment>
<comment type="cofactor">
    <cofactor evidence="1">
        <name>Zn(2+)</name>
        <dbReference type="ChEBI" id="CHEBI:29105"/>
    </cofactor>
    <cofactor evidence="1">
        <name>Co(2+)</name>
        <dbReference type="ChEBI" id="CHEBI:48828"/>
    </cofactor>
    <text evidence="1">Binds 2 Zn(2+) or Co(2+) ions per subunit.</text>
</comment>
<comment type="pathway">
    <text evidence="1">Amino-acid biosynthesis; L-lysine biosynthesis via DAP pathway; LL-2,6-diaminopimelate from (S)-tetrahydrodipicolinate (succinylase route): step 3/3.</text>
</comment>
<comment type="subunit">
    <text evidence="1">Homodimer.</text>
</comment>
<comment type="similarity">
    <text evidence="1">Belongs to the peptidase M20A family. DapE subfamily.</text>
</comment>
<accession>Q9PH30</accession>
<sequence>MSEVFDLTCDLISRPSVTPEDAGCQAMIAARLERVGFTCEHLHYGSVANLWATHGQGAPVLVLLGHTDVVPPGPIEAWTSDPFIPQRREGKLYGRGAADMKGSVAAFVIAAERFLVAHAGHPGTLAILLTSDEEGQAIDGVRKVAETLRQRGQGIDWCLTGEPSSSKRLGDLLRVGRRGSLSATLHVKGVQGHVAYPHQARNPIHLAVPALAALTARHWDDGDESFPSTSLQISNIHAGTGANNVIPGALEVAFNLRYNPHWSAPRLESEIVALLDQHGLDYTLHWHRSGEPFYTPEGKLRRIAREVLERFSGAPPEESTGGGTSDARFIAPLGAQCIEIGPVNASIHQVDEHVCLADLEALPDLYQLLIERLLADH</sequence>
<name>DAPE_XYLFA</name>
<proteinExistence type="inferred from homology"/>
<organism>
    <name type="scientific">Xylella fastidiosa (strain 9a5c)</name>
    <dbReference type="NCBI Taxonomy" id="160492"/>
    <lineage>
        <taxon>Bacteria</taxon>
        <taxon>Pseudomonadati</taxon>
        <taxon>Pseudomonadota</taxon>
        <taxon>Gammaproteobacteria</taxon>
        <taxon>Lysobacterales</taxon>
        <taxon>Lysobacteraceae</taxon>
        <taxon>Xylella</taxon>
    </lineage>
</organism>
<reference key="1">
    <citation type="journal article" date="2000" name="Nature">
        <title>The genome sequence of the plant pathogen Xylella fastidiosa.</title>
        <authorList>
            <person name="Simpson A.J.G."/>
            <person name="Reinach F.C."/>
            <person name="Arruda P."/>
            <person name="Abreu F.A."/>
            <person name="Acencio M."/>
            <person name="Alvarenga R."/>
            <person name="Alves L.M.C."/>
            <person name="Araya J.E."/>
            <person name="Baia G.S."/>
            <person name="Baptista C.S."/>
            <person name="Barros M.H."/>
            <person name="Bonaccorsi E.D."/>
            <person name="Bordin S."/>
            <person name="Bove J.M."/>
            <person name="Briones M.R.S."/>
            <person name="Bueno M.R.P."/>
            <person name="Camargo A.A."/>
            <person name="Camargo L.E.A."/>
            <person name="Carraro D.M."/>
            <person name="Carrer H."/>
            <person name="Colauto N.B."/>
            <person name="Colombo C."/>
            <person name="Costa F.F."/>
            <person name="Costa M.C.R."/>
            <person name="Costa-Neto C.M."/>
            <person name="Coutinho L.L."/>
            <person name="Cristofani M."/>
            <person name="Dias-Neto E."/>
            <person name="Docena C."/>
            <person name="El-Dorry H."/>
            <person name="Facincani A.P."/>
            <person name="Ferreira A.J.S."/>
            <person name="Ferreira V.C.A."/>
            <person name="Ferro J.A."/>
            <person name="Fraga J.S."/>
            <person name="Franca S.C."/>
            <person name="Franco M.C."/>
            <person name="Frohme M."/>
            <person name="Furlan L.R."/>
            <person name="Garnier M."/>
            <person name="Goldman G.H."/>
            <person name="Goldman M.H.S."/>
            <person name="Gomes S.L."/>
            <person name="Gruber A."/>
            <person name="Ho P.L."/>
            <person name="Hoheisel J.D."/>
            <person name="Junqueira M.L."/>
            <person name="Kemper E.L."/>
            <person name="Kitajima J.P."/>
            <person name="Krieger J.E."/>
            <person name="Kuramae E.E."/>
            <person name="Laigret F."/>
            <person name="Lambais M.R."/>
            <person name="Leite L.C.C."/>
            <person name="Lemos E.G.M."/>
            <person name="Lemos M.V.F."/>
            <person name="Lopes S.A."/>
            <person name="Lopes C.R."/>
            <person name="Machado J.A."/>
            <person name="Machado M.A."/>
            <person name="Madeira A.M.B.N."/>
            <person name="Madeira H.M.F."/>
            <person name="Marino C.L."/>
            <person name="Marques M.V."/>
            <person name="Martins E.A.L."/>
            <person name="Martins E.M.F."/>
            <person name="Matsukuma A.Y."/>
            <person name="Menck C.F.M."/>
            <person name="Miracca E.C."/>
            <person name="Miyaki C.Y."/>
            <person name="Monteiro-Vitorello C.B."/>
            <person name="Moon D.H."/>
            <person name="Nagai M.A."/>
            <person name="Nascimento A.L.T.O."/>
            <person name="Netto L.E.S."/>
            <person name="Nhani A. Jr."/>
            <person name="Nobrega F.G."/>
            <person name="Nunes L.R."/>
            <person name="Oliveira M.A."/>
            <person name="de Oliveira M.C."/>
            <person name="de Oliveira R.C."/>
            <person name="Palmieri D.A."/>
            <person name="Paris A."/>
            <person name="Peixoto B.R."/>
            <person name="Pereira G.A.G."/>
            <person name="Pereira H.A. Jr."/>
            <person name="Pesquero J.B."/>
            <person name="Quaggio R.B."/>
            <person name="Roberto P.G."/>
            <person name="Rodrigues V."/>
            <person name="de Rosa A.J.M."/>
            <person name="de Rosa V.E. Jr."/>
            <person name="de Sa R.G."/>
            <person name="Santelli R.V."/>
            <person name="Sawasaki H.E."/>
            <person name="da Silva A.C.R."/>
            <person name="da Silva A.M."/>
            <person name="da Silva F.R."/>
            <person name="Silva W.A. Jr."/>
            <person name="da Silveira J.F."/>
            <person name="Silvestri M.L.Z."/>
            <person name="Siqueira W.J."/>
            <person name="de Souza A.A."/>
            <person name="de Souza A.P."/>
            <person name="Terenzi M.F."/>
            <person name="Truffi D."/>
            <person name="Tsai S.M."/>
            <person name="Tsuhako M.H."/>
            <person name="Vallada H."/>
            <person name="Van Sluys M.A."/>
            <person name="Verjovski-Almeida S."/>
            <person name="Vettore A.L."/>
            <person name="Zago M.A."/>
            <person name="Zatz M."/>
            <person name="Meidanis J."/>
            <person name="Setubal J.C."/>
        </authorList>
    </citation>
    <scope>NUCLEOTIDE SEQUENCE [LARGE SCALE GENOMIC DNA]</scope>
    <source>
        <strain>9a5c</strain>
    </source>
</reference>
<keyword id="KW-0028">Amino-acid biosynthesis</keyword>
<keyword id="KW-0170">Cobalt</keyword>
<keyword id="KW-0220">Diaminopimelate biosynthesis</keyword>
<keyword id="KW-0378">Hydrolase</keyword>
<keyword id="KW-0457">Lysine biosynthesis</keyword>
<keyword id="KW-0479">Metal-binding</keyword>
<keyword id="KW-0862">Zinc</keyword>
<gene>
    <name evidence="1" type="primary">dapE</name>
    <name type="ordered locus">XF_0116</name>
</gene>
<feature type="chain" id="PRO_0000375789" description="Succinyl-diaminopimelate desuccinylase">
    <location>
        <begin position="1"/>
        <end position="377"/>
    </location>
</feature>
<feature type="active site" evidence="1">
    <location>
        <position position="68"/>
    </location>
</feature>
<feature type="active site" description="Proton acceptor" evidence="1">
    <location>
        <position position="133"/>
    </location>
</feature>
<feature type="binding site" evidence="1">
    <location>
        <position position="66"/>
    </location>
    <ligand>
        <name>Zn(2+)</name>
        <dbReference type="ChEBI" id="CHEBI:29105"/>
        <label>1</label>
    </ligand>
</feature>
<feature type="binding site" evidence="1">
    <location>
        <position position="99"/>
    </location>
    <ligand>
        <name>Zn(2+)</name>
        <dbReference type="ChEBI" id="CHEBI:29105"/>
        <label>1</label>
    </ligand>
</feature>
<feature type="binding site" evidence="1">
    <location>
        <position position="99"/>
    </location>
    <ligand>
        <name>Zn(2+)</name>
        <dbReference type="ChEBI" id="CHEBI:29105"/>
        <label>2</label>
    </ligand>
</feature>
<feature type="binding site" evidence="1">
    <location>
        <position position="134"/>
    </location>
    <ligand>
        <name>Zn(2+)</name>
        <dbReference type="ChEBI" id="CHEBI:29105"/>
        <label>2</label>
    </ligand>
</feature>
<feature type="binding site" evidence="1">
    <location>
        <position position="162"/>
    </location>
    <ligand>
        <name>Zn(2+)</name>
        <dbReference type="ChEBI" id="CHEBI:29105"/>
        <label>1</label>
    </ligand>
</feature>
<feature type="binding site" evidence="1">
    <location>
        <position position="348"/>
    </location>
    <ligand>
        <name>Zn(2+)</name>
        <dbReference type="ChEBI" id="CHEBI:29105"/>
        <label>2</label>
    </ligand>
</feature>
<protein>
    <recommendedName>
        <fullName evidence="1">Succinyl-diaminopimelate desuccinylase</fullName>
        <shortName evidence="1">SDAP desuccinylase</shortName>
        <ecNumber evidence="1">3.5.1.18</ecNumber>
    </recommendedName>
    <alternativeName>
        <fullName evidence="1">N-succinyl-LL-2,6-diaminoheptanedioate amidohydrolase</fullName>
    </alternativeName>
</protein>